<sequence>MRILADQAIPYVYKLFGSDNYVQVCDGRSISANMLKDVDVLIIRSITKVNHMLLYDSSIKFIGTVTSGVDHIDQNYLKNNNIRCVSTPGSNAVSVVEYVCATLFWLAQRDCFFLRDKTVGIIGVGNIGNLLYQRLNSLGVHTLLYDPYKSKCDTDRMSWKSLDILVSKSDILTLHVPLTYTGAYPTWHMINKDILDALPSNSILINTSRGAVVNNDDLLAILRCGKKINVILDVWESEPKLSLPLLSYVDIGTAHIAGYSFESRIRSIKKIYDDYCDYFNVKNKVNWISLGLSDIRYIAVSRLDECIINRLIQLVYNVYYDHIALKNNVLRLRGFDKLREYYCFRREWSSLLVDSKNGYNNDILFKFGFSTL</sequence>
<gene>
    <name evidence="1" type="primary">pdxB</name>
    <name type="ordered locus">Bfl497</name>
</gene>
<keyword id="KW-0963">Cytoplasm</keyword>
<keyword id="KW-0520">NAD</keyword>
<keyword id="KW-0560">Oxidoreductase</keyword>
<keyword id="KW-0664">Pyridoxine biosynthesis</keyword>
<keyword id="KW-1185">Reference proteome</keyword>
<proteinExistence type="inferred from homology"/>
<comment type="function">
    <text evidence="1">Catalyzes the oxidation of erythronate-4-phosphate to 3-hydroxy-2-oxo-4-phosphonooxybutanoate.</text>
</comment>
<comment type="catalytic activity">
    <reaction evidence="1">
        <text>4-phospho-D-erythronate + NAD(+) = (R)-3-hydroxy-2-oxo-4-phosphooxybutanoate + NADH + H(+)</text>
        <dbReference type="Rhea" id="RHEA:18829"/>
        <dbReference type="ChEBI" id="CHEBI:15378"/>
        <dbReference type="ChEBI" id="CHEBI:57540"/>
        <dbReference type="ChEBI" id="CHEBI:57945"/>
        <dbReference type="ChEBI" id="CHEBI:58538"/>
        <dbReference type="ChEBI" id="CHEBI:58766"/>
        <dbReference type="EC" id="1.1.1.290"/>
    </reaction>
</comment>
<comment type="pathway">
    <text evidence="1">Cofactor biosynthesis; pyridoxine 5'-phosphate biosynthesis; pyridoxine 5'-phosphate from D-erythrose 4-phosphate: step 2/5.</text>
</comment>
<comment type="subunit">
    <text evidence="1">Homodimer.</text>
</comment>
<comment type="subcellular location">
    <subcellularLocation>
        <location evidence="1">Cytoplasm</location>
    </subcellularLocation>
</comment>
<comment type="similarity">
    <text evidence="1">Belongs to the D-isomer specific 2-hydroxyacid dehydrogenase family. PdxB subfamily.</text>
</comment>
<feature type="chain" id="PRO_0000075973" description="Erythronate-4-phosphate dehydrogenase">
    <location>
        <begin position="1"/>
        <end position="372"/>
    </location>
</feature>
<feature type="active site" evidence="1">
    <location>
        <position position="209"/>
    </location>
</feature>
<feature type="active site" evidence="1">
    <location>
        <position position="238"/>
    </location>
</feature>
<feature type="active site" description="Proton donor" evidence="1">
    <location>
        <position position="255"/>
    </location>
</feature>
<feature type="binding site" evidence="1">
    <location>
        <position position="45"/>
    </location>
    <ligand>
        <name>substrate</name>
    </ligand>
</feature>
<feature type="binding site" evidence="1">
    <location>
        <position position="66"/>
    </location>
    <ligand>
        <name>substrate</name>
    </ligand>
</feature>
<feature type="binding site" evidence="1">
    <location>
        <position position="146"/>
    </location>
    <ligand>
        <name>NAD(+)</name>
        <dbReference type="ChEBI" id="CHEBI:57540"/>
    </ligand>
</feature>
<feature type="binding site" evidence="1">
    <location>
        <position position="233"/>
    </location>
    <ligand>
        <name>NAD(+)</name>
        <dbReference type="ChEBI" id="CHEBI:57540"/>
    </ligand>
</feature>
<feature type="binding site" evidence="1">
    <location>
        <position position="258"/>
    </location>
    <ligand>
        <name>NAD(+)</name>
        <dbReference type="ChEBI" id="CHEBI:57540"/>
    </ligand>
</feature>
<feature type="binding site" evidence="1">
    <location>
        <position position="259"/>
    </location>
    <ligand>
        <name>substrate</name>
    </ligand>
</feature>
<protein>
    <recommendedName>
        <fullName evidence="1">Erythronate-4-phosphate dehydrogenase</fullName>
        <ecNumber evidence="1">1.1.1.290</ecNumber>
    </recommendedName>
</protein>
<accession>Q7VRU9</accession>
<reference key="1">
    <citation type="journal article" date="2003" name="Proc. Natl. Acad. Sci. U.S.A.">
        <title>The genome sequence of Blochmannia floridanus: comparative analysis of reduced genomes.</title>
        <authorList>
            <person name="Gil R."/>
            <person name="Silva F.J."/>
            <person name="Zientz E."/>
            <person name="Delmotte F."/>
            <person name="Gonzalez-Candelas F."/>
            <person name="Latorre A."/>
            <person name="Rausell C."/>
            <person name="Kamerbeek J."/>
            <person name="Gadau J."/>
            <person name="Hoelldobler B."/>
            <person name="van Ham R.C.H.J."/>
            <person name="Gross R."/>
            <person name="Moya A."/>
        </authorList>
    </citation>
    <scope>NUCLEOTIDE SEQUENCE [LARGE SCALE GENOMIC DNA]</scope>
</reference>
<organism>
    <name type="scientific">Blochmanniella floridana</name>
    <dbReference type="NCBI Taxonomy" id="203907"/>
    <lineage>
        <taxon>Bacteria</taxon>
        <taxon>Pseudomonadati</taxon>
        <taxon>Pseudomonadota</taxon>
        <taxon>Gammaproteobacteria</taxon>
        <taxon>Enterobacterales</taxon>
        <taxon>Enterobacteriaceae</taxon>
        <taxon>ant endosymbionts</taxon>
        <taxon>Candidatus Blochmanniella</taxon>
    </lineage>
</organism>
<dbReference type="EC" id="1.1.1.290" evidence="1"/>
<dbReference type="EMBL" id="BX248583">
    <property type="protein sequence ID" value="CAD83186.1"/>
    <property type="molecule type" value="Genomic_DNA"/>
</dbReference>
<dbReference type="SMR" id="Q7VRU9"/>
<dbReference type="STRING" id="203907.Bfl497"/>
<dbReference type="KEGG" id="bfl:Bfl497"/>
<dbReference type="eggNOG" id="COG0111">
    <property type="taxonomic scope" value="Bacteria"/>
</dbReference>
<dbReference type="HOGENOM" id="CLU_019796_4_0_6"/>
<dbReference type="OrthoDB" id="9770208at2"/>
<dbReference type="UniPathway" id="UPA00244">
    <property type="reaction ID" value="UER00310"/>
</dbReference>
<dbReference type="Proteomes" id="UP000002192">
    <property type="component" value="Chromosome"/>
</dbReference>
<dbReference type="GO" id="GO:0005829">
    <property type="term" value="C:cytosol"/>
    <property type="evidence" value="ECO:0007669"/>
    <property type="project" value="TreeGrafter"/>
</dbReference>
<dbReference type="GO" id="GO:0033711">
    <property type="term" value="F:4-phosphoerythronate dehydrogenase activity"/>
    <property type="evidence" value="ECO:0007669"/>
    <property type="project" value="UniProtKB-EC"/>
</dbReference>
<dbReference type="GO" id="GO:0030267">
    <property type="term" value="F:glyoxylate reductase (NADPH) activity"/>
    <property type="evidence" value="ECO:0007669"/>
    <property type="project" value="TreeGrafter"/>
</dbReference>
<dbReference type="GO" id="GO:0016618">
    <property type="term" value="F:hydroxypyruvate reductase [NAD(P)H] activity"/>
    <property type="evidence" value="ECO:0007669"/>
    <property type="project" value="TreeGrafter"/>
</dbReference>
<dbReference type="GO" id="GO:0051287">
    <property type="term" value="F:NAD binding"/>
    <property type="evidence" value="ECO:0007669"/>
    <property type="project" value="InterPro"/>
</dbReference>
<dbReference type="GO" id="GO:0046983">
    <property type="term" value="F:protein dimerization activity"/>
    <property type="evidence" value="ECO:0007669"/>
    <property type="project" value="InterPro"/>
</dbReference>
<dbReference type="GO" id="GO:0008615">
    <property type="term" value="P:pyridoxine biosynthetic process"/>
    <property type="evidence" value="ECO:0007669"/>
    <property type="project" value="UniProtKB-UniRule"/>
</dbReference>
<dbReference type="CDD" id="cd12158">
    <property type="entry name" value="ErythrP_dh"/>
    <property type="match status" value="1"/>
</dbReference>
<dbReference type="Gene3D" id="3.30.1370.170">
    <property type="match status" value="1"/>
</dbReference>
<dbReference type="Gene3D" id="3.40.50.720">
    <property type="entry name" value="NAD(P)-binding Rossmann-like Domain"/>
    <property type="match status" value="2"/>
</dbReference>
<dbReference type="HAMAP" id="MF_01825">
    <property type="entry name" value="PdxB"/>
    <property type="match status" value="1"/>
</dbReference>
<dbReference type="InterPro" id="IPR050223">
    <property type="entry name" value="D-isomer_2-hydroxyacid_DH"/>
</dbReference>
<dbReference type="InterPro" id="IPR006139">
    <property type="entry name" value="D-isomer_2_OHA_DH_cat_dom"/>
</dbReference>
<dbReference type="InterPro" id="IPR029753">
    <property type="entry name" value="D-isomer_DH_CS"/>
</dbReference>
<dbReference type="InterPro" id="IPR029752">
    <property type="entry name" value="D-isomer_DH_CS1"/>
</dbReference>
<dbReference type="InterPro" id="IPR006140">
    <property type="entry name" value="D-isomer_DH_NAD-bd"/>
</dbReference>
<dbReference type="InterPro" id="IPR020921">
    <property type="entry name" value="Erythronate-4-P_DHase"/>
</dbReference>
<dbReference type="InterPro" id="IPR024531">
    <property type="entry name" value="Erythronate-4-P_DHase_dimer"/>
</dbReference>
<dbReference type="InterPro" id="IPR036291">
    <property type="entry name" value="NAD(P)-bd_dom_sf"/>
</dbReference>
<dbReference type="InterPro" id="IPR038251">
    <property type="entry name" value="PdxB_dimer_sf"/>
</dbReference>
<dbReference type="PANTHER" id="PTHR10996">
    <property type="entry name" value="2-HYDROXYACID DEHYDROGENASE-RELATED"/>
    <property type="match status" value="1"/>
</dbReference>
<dbReference type="PANTHER" id="PTHR10996:SF283">
    <property type="entry name" value="GLYOXYLATE_HYDROXYPYRUVATE REDUCTASE B"/>
    <property type="match status" value="1"/>
</dbReference>
<dbReference type="Pfam" id="PF00389">
    <property type="entry name" value="2-Hacid_dh"/>
    <property type="match status" value="1"/>
</dbReference>
<dbReference type="Pfam" id="PF02826">
    <property type="entry name" value="2-Hacid_dh_C"/>
    <property type="match status" value="1"/>
</dbReference>
<dbReference type="Pfam" id="PF11890">
    <property type="entry name" value="DUF3410"/>
    <property type="match status" value="1"/>
</dbReference>
<dbReference type="SUPFAM" id="SSF52283">
    <property type="entry name" value="Formate/glycerate dehydrogenase catalytic domain-like"/>
    <property type="match status" value="1"/>
</dbReference>
<dbReference type="SUPFAM" id="SSF51735">
    <property type="entry name" value="NAD(P)-binding Rossmann-fold domains"/>
    <property type="match status" value="1"/>
</dbReference>
<dbReference type="PROSITE" id="PS00065">
    <property type="entry name" value="D_2_HYDROXYACID_DH_1"/>
    <property type="match status" value="1"/>
</dbReference>
<dbReference type="PROSITE" id="PS00671">
    <property type="entry name" value="D_2_HYDROXYACID_DH_3"/>
    <property type="match status" value="1"/>
</dbReference>
<evidence type="ECO:0000255" key="1">
    <source>
        <dbReference type="HAMAP-Rule" id="MF_01825"/>
    </source>
</evidence>
<name>PDXB_BLOFL</name>